<proteinExistence type="inferred from homology"/>
<accession>B7LVW5</accession>
<reference key="1">
    <citation type="journal article" date="2009" name="PLoS Genet.">
        <title>Organised genome dynamics in the Escherichia coli species results in highly diverse adaptive paths.</title>
        <authorList>
            <person name="Touchon M."/>
            <person name="Hoede C."/>
            <person name="Tenaillon O."/>
            <person name="Barbe V."/>
            <person name="Baeriswyl S."/>
            <person name="Bidet P."/>
            <person name="Bingen E."/>
            <person name="Bonacorsi S."/>
            <person name="Bouchier C."/>
            <person name="Bouvet O."/>
            <person name="Calteau A."/>
            <person name="Chiapello H."/>
            <person name="Clermont O."/>
            <person name="Cruveiller S."/>
            <person name="Danchin A."/>
            <person name="Diard M."/>
            <person name="Dossat C."/>
            <person name="Karoui M.E."/>
            <person name="Frapy E."/>
            <person name="Garry L."/>
            <person name="Ghigo J.M."/>
            <person name="Gilles A.M."/>
            <person name="Johnson J."/>
            <person name="Le Bouguenec C."/>
            <person name="Lescat M."/>
            <person name="Mangenot S."/>
            <person name="Martinez-Jehanne V."/>
            <person name="Matic I."/>
            <person name="Nassif X."/>
            <person name="Oztas S."/>
            <person name="Petit M.A."/>
            <person name="Pichon C."/>
            <person name="Rouy Z."/>
            <person name="Ruf C.S."/>
            <person name="Schneider D."/>
            <person name="Tourret J."/>
            <person name="Vacherie B."/>
            <person name="Vallenet D."/>
            <person name="Medigue C."/>
            <person name="Rocha E.P.C."/>
            <person name="Denamur E."/>
        </authorList>
    </citation>
    <scope>NUCLEOTIDE SEQUENCE [LARGE SCALE GENOMIC DNA]</scope>
    <source>
        <strain>ATCC 35469 / DSM 13698 / BCRC 15582 / CCUG 18766 / IAM 14443 / JCM 21226 / LMG 7866 / NBRC 102419 / NCTC 12128 / CDC 0568-73</strain>
    </source>
</reference>
<gene>
    <name evidence="1" type="primary">xni</name>
    <name evidence="1" type="synonym">ygdG</name>
    <name type="ordered locus">EFER_0262</name>
</gene>
<sequence>MAVHLLIVDALNLIRRIHAVQGSPCVETCQHALDQLIMHSQPTHVVAVFDDENRNSGWRHQRLPDYKAGRPPMPDELHNEMPTLRAAFEQRGVPCWSATGNEADDLAATLAVKVTQAGHQATIVSTDKGYCQLLSPTLRIRDYFQKRWLDAPFIDKEFGVQPQQLPDYWGLAGISSSKVPGVAGIGPKSATQLLVEFQSLEGIYENLDAVAEKWRKKLEMHKEMAFLCRDIARLQTDVHIDGNLQQLRLKR</sequence>
<comment type="function">
    <text evidence="1">Has flap endonuclease activity. During DNA replication, flap endonucleases cleave the 5'-overhanging flap structure that is generated by displacement synthesis when DNA polymerase encounters the 5'-end of a downstream Okazaki fragment.</text>
</comment>
<comment type="cofactor">
    <cofactor evidence="1">
        <name>Mg(2+)</name>
        <dbReference type="ChEBI" id="CHEBI:18420"/>
    </cofactor>
    <text evidence="1">Binds 2 Mg(2+) per subunit. Only one magnesium ion has a direct interaction with the protein, the other interactions are indirect.</text>
</comment>
<comment type="cofactor">
    <cofactor evidence="1">
        <name>K(+)</name>
        <dbReference type="ChEBI" id="CHEBI:29103"/>
    </cofactor>
    <text evidence="1">Binds 1 K(+) per subunit. The potassium ion strongly increases the affinity for DNA.</text>
</comment>
<comment type="similarity">
    <text evidence="1">Belongs to the Xni family.</text>
</comment>
<comment type="sequence caution" evidence="2">
    <conflict type="erroneous initiation">
        <sequence resource="EMBL-CDS" id="CAQ87831"/>
    </conflict>
    <text>Extended N-terminus.</text>
</comment>
<feature type="chain" id="PRO_1000138384" description="Flap endonuclease Xni">
    <location>
        <begin position="1"/>
        <end position="251"/>
    </location>
</feature>
<feature type="domain" description="5'-3' exonuclease" evidence="1">
    <location>
        <begin position="160"/>
        <end position="250"/>
    </location>
</feature>
<feature type="region of interest" description="Interaction with DNA" evidence="1">
    <location>
        <begin position="184"/>
        <end position="189"/>
    </location>
</feature>
<feature type="binding site" evidence="1">
    <location>
        <position position="104"/>
    </location>
    <ligand>
        <name>Mg(2+)</name>
        <dbReference type="ChEBI" id="CHEBI:18420"/>
    </ligand>
</feature>
<feature type="binding site" evidence="1">
    <location>
        <position position="171"/>
    </location>
    <ligand>
        <name>K(+)</name>
        <dbReference type="ChEBI" id="CHEBI:29103"/>
    </ligand>
</feature>
<feature type="binding site" evidence="1">
    <location>
        <position position="172"/>
    </location>
    <ligand>
        <name>K(+)</name>
        <dbReference type="ChEBI" id="CHEBI:29103"/>
    </ligand>
</feature>
<feature type="binding site" evidence="1">
    <location>
        <position position="180"/>
    </location>
    <ligand>
        <name>K(+)</name>
        <dbReference type="ChEBI" id="CHEBI:29103"/>
    </ligand>
</feature>
<feature type="binding site" evidence="1">
    <location>
        <position position="182"/>
    </location>
    <ligand>
        <name>K(+)</name>
        <dbReference type="ChEBI" id="CHEBI:29103"/>
    </ligand>
</feature>
<feature type="binding site" evidence="1">
    <location>
        <position position="185"/>
    </location>
    <ligand>
        <name>K(+)</name>
        <dbReference type="ChEBI" id="CHEBI:29103"/>
    </ligand>
</feature>
<name>XNI_ESCF3</name>
<organism>
    <name type="scientific">Escherichia fergusonii (strain ATCC 35469 / DSM 13698 / CCUG 18766 / IAM 14443 / JCM 21226 / LMG 7866 / NBRC 102419 / NCTC 12128 / CDC 0568-73)</name>
    <dbReference type="NCBI Taxonomy" id="585054"/>
    <lineage>
        <taxon>Bacteria</taxon>
        <taxon>Pseudomonadati</taxon>
        <taxon>Pseudomonadota</taxon>
        <taxon>Gammaproteobacteria</taxon>
        <taxon>Enterobacterales</taxon>
        <taxon>Enterobacteriaceae</taxon>
        <taxon>Escherichia</taxon>
    </lineage>
</organism>
<dbReference type="EC" id="3.1.-.-" evidence="1"/>
<dbReference type="EMBL" id="CU928158">
    <property type="protein sequence ID" value="CAQ87831.1"/>
    <property type="status" value="ALT_INIT"/>
    <property type="molecule type" value="Genomic_DNA"/>
</dbReference>
<dbReference type="RefSeq" id="WP_002431867.1">
    <property type="nucleotide sequence ID" value="NC_011740.1"/>
</dbReference>
<dbReference type="SMR" id="B7LVW5"/>
<dbReference type="GeneID" id="75058655"/>
<dbReference type="KEGG" id="efe:EFER_0262"/>
<dbReference type="HOGENOM" id="CLU_004675_1_2_6"/>
<dbReference type="Proteomes" id="UP000000745">
    <property type="component" value="Chromosome"/>
</dbReference>
<dbReference type="GO" id="GO:0008409">
    <property type="term" value="F:5'-3' exonuclease activity"/>
    <property type="evidence" value="ECO:0007669"/>
    <property type="project" value="InterPro"/>
</dbReference>
<dbReference type="GO" id="GO:0017108">
    <property type="term" value="F:5'-flap endonuclease activity"/>
    <property type="evidence" value="ECO:0007669"/>
    <property type="project" value="UniProtKB-UniRule"/>
</dbReference>
<dbReference type="GO" id="GO:0003677">
    <property type="term" value="F:DNA binding"/>
    <property type="evidence" value="ECO:0007669"/>
    <property type="project" value="UniProtKB-UniRule"/>
</dbReference>
<dbReference type="GO" id="GO:0000287">
    <property type="term" value="F:magnesium ion binding"/>
    <property type="evidence" value="ECO:0007669"/>
    <property type="project" value="UniProtKB-UniRule"/>
</dbReference>
<dbReference type="GO" id="GO:0030955">
    <property type="term" value="F:potassium ion binding"/>
    <property type="evidence" value="ECO:0007669"/>
    <property type="project" value="UniProtKB-UniRule"/>
</dbReference>
<dbReference type="GO" id="GO:0033567">
    <property type="term" value="P:DNA replication, Okazaki fragment processing"/>
    <property type="evidence" value="ECO:0007669"/>
    <property type="project" value="UniProtKB-UniRule"/>
</dbReference>
<dbReference type="CDD" id="cd09898">
    <property type="entry name" value="H3TH_53EXO"/>
    <property type="match status" value="1"/>
</dbReference>
<dbReference type="CDD" id="cd09859">
    <property type="entry name" value="PIN_53EXO"/>
    <property type="match status" value="1"/>
</dbReference>
<dbReference type="FunFam" id="1.10.150.20:FF:000003">
    <property type="entry name" value="DNA polymerase I"/>
    <property type="match status" value="1"/>
</dbReference>
<dbReference type="FunFam" id="3.40.50.1010:FF:000011">
    <property type="entry name" value="Flap endonuclease Xni"/>
    <property type="match status" value="1"/>
</dbReference>
<dbReference type="Gene3D" id="1.10.150.20">
    <property type="entry name" value="5' to 3' exonuclease, C-terminal subdomain"/>
    <property type="match status" value="1"/>
</dbReference>
<dbReference type="Gene3D" id="3.40.50.1010">
    <property type="entry name" value="5'-nuclease"/>
    <property type="match status" value="1"/>
</dbReference>
<dbReference type="HAMAP" id="MF_01192">
    <property type="entry name" value="Xni"/>
    <property type="match status" value="1"/>
</dbReference>
<dbReference type="InterPro" id="IPR020046">
    <property type="entry name" value="5-3_exonucl_a-hlix_arch_N"/>
</dbReference>
<dbReference type="InterPro" id="IPR002421">
    <property type="entry name" value="5-3_exonuclease"/>
</dbReference>
<dbReference type="InterPro" id="IPR036279">
    <property type="entry name" value="5-3_exonuclease_C_sf"/>
</dbReference>
<dbReference type="InterPro" id="IPR020045">
    <property type="entry name" value="DNA_polI_H3TH"/>
</dbReference>
<dbReference type="InterPro" id="IPR038969">
    <property type="entry name" value="FEN"/>
</dbReference>
<dbReference type="InterPro" id="IPR008918">
    <property type="entry name" value="HhH2"/>
</dbReference>
<dbReference type="InterPro" id="IPR029060">
    <property type="entry name" value="PIN-like_dom_sf"/>
</dbReference>
<dbReference type="InterPro" id="IPR022895">
    <property type="entry name" value="Xni"/>
</dbReference>
<dbReference type="NCBIfam" id="NF007017">
    <property type="entry name" value="PRK09482.1"/>
    <property type="match status" value="1"/>
</dbReference>
<dbReference type="PANTHER" id="PTHR42646:SF2">
    <property type="entry name" value="5'-3' EXONUCLEASE FAMILY PROTEIN"/>
    <property type="match status" value="1"/>
</dbReference>
<dbReference type="PANTHER" id="PTHR42646">
    <property type="entry name" value="FLAP ENDONUCLEASE XNI"/>
    <property type="match status" value="1"/>
</dbReference>
<dbReference type="Pfam" id="PF01367">
    <property type="entry name" value="5_3_exonuc"/>
    <property type="match status" value="1"/>
</dbReference>
<dbReference type="Pfam" id="PF02739">
    <property type="entry name" value="5_3_exonuc_N"/>
    <property type="match status" value="1"/>
</dbReference>
<dbReference type="SMART" id="SM00475">
    <property type="entry name" value="53EXOc"/>
    <property type="match status" value="1"/>
</dbReference>
<dbReference type="SMART" id="SM00279">
    <property type="entry name" value="HhH2"/>
    <property type="match status" value="1"/>
</dbReference>
<dbReference type="SUPFAM" id="SSF47807">
    <property type="entry name" value="5' to 3' exonuclease, C-terminal subdomain"/>
    <property type="match status" value="1"/>
</dbReference>
<dbReference type="SUPFAM" id="SSF88723">
    <property type="entry name" value="PIN domain-like"/>
    <property type="match status" value="1"/>
</dbReference>
<keyword id="KW-0238">DNA-binding</keyword>
<keyword id="KW-0255">Endonuclease</keyword>
<keyword id="KW-0378">Hydrolase</keyword>
<keyword id="KW-0460">Magnesium</keyword>
<keyword id="KW-0479">Metal-binding</keyword>
<keyword id="KW-0540">Nuclease</keyword>
<keyword id="KW-0630">Potassium</keyword>
<evidence type="ECO:0000255" key="1">
    <source>
        <dbReference type="HAMAP-Rule" id="MF_01192"/>
    </source>
</evidence>
<evidence type="ECO:0000305" key="2"/>
<protein>
    <recommendedName>
        <fullName evidence="1">Flap endonuclease Xni</fullName>
        <shortName evidence="1">FEN</shortName>
        <ecNumber evidence="1">3.1.-.-</ecNumber>
    </recommendedName>
</protein>